<organism>
    <name type="scientific">Rickettsia prowazekii (strain Madrid E)</name>
    <dbReference type="NCBI Taxonomy" id="272947"/>
    <lineage>
        <taxon>Bacteria</taxon>
        <taxon>Pseudomonadati</taxon>
        <taxon>Pseudomonadota</taxon>
        <taxon>Alphaproteobacteria</taxon>
        <taxon>Rickettsiales</taxon>
        <taxon>Rickettsiaceae</taxon>
        <taxon>Rickettsieae</taxon>
        <taxon>Rickettsia</taxon>
        <taxon>typhus group</taxon>
    </lineage>
</organism>
<evidence type="ECO:0000255" key="1">
    <source>
        <dbReference type="HAMAP-Rule" id="MF_00948"/>
    </source>
</evidence>
<keyword id="KW-1185">Reference proteome</keyword>
<keyword id="KW-0804">Transcription</keyword>
<keyword id="KW-0889">Transcription antitermination</keyword>
<keyword id="KW-0805">Transcription regulation</keyword>
<keyword id="KW-0806">Transcription termination</keyword>
<gene>
    <name evidence="1" type="primary">nusG</name>
    <name type="ordered locus">RP135</name>
</gene>
<accession>P50056</accession>
<protein>
    <recommendedName>
        <fullName evidence="1">Transcription termination/antitermination protein NusG</fullName>
    </recommendedName>
</protein>
<name>NUSG_RICPR</name>
<reference key="1">
    <citation type="journal article" date="1996" name="J. Bacteriol.">
        <title>A chimeric disposition of the elongation factor genes in Rickettsia prowazekii.</title>
        <authorList>
            <person name="Syvaenen A.-C."/>
            <person name="Amiri H."/>
            <person name="Jamal A."/>
            <person name="Andersson S.G.E."/>
            <person name="Kurland C.G."/>
        </authorList>
    </citation>
    <scope>NUCLEOTIDE SEQUENCE [GENOMIC DNA]</scope>
    <source>
        <strain>Madrid E</strain>
    </source>
</reference>
<reference key="2">
    <citation type="journal article" date="1998" name="Nature">
        <title>The genome sequence of Rickettsia prowazekii and the origin of mitochondria.</title>
        <authorList>
            <person name="Andersson S.G.E."/>
            <person name="Zomorodipour A."/>
            <person name="Andersson J.O."/>
            <person name="Sicheritz-Ponten T."/>
            <person name="Alsmark U.C.M."/>
            <person name="Podowski R.M."/>
            <person name="Naeslund A.K."/>
            <person name="Eriksson A.-S."/>
            <person name="Winkler H.H."/>
            <person name="Kurland C.G."/>
        </authorList>
    </citation>
    <scope>NUCLEOTIDE SEQUENCE [LARGE SCALE GENOMIC DNA]</scope>
    <source>
        <strain>Madrid E</strain>
    </source>
</reference>
<proteinExistence type="inferred from homology"/>
<dbReference type="EMBL" id="Z54171">
    <property type="protein sequence ID" value="CAA90886.1"/>
    <property type="molecule type" value="Genomic_DNA"/>
</dbReference>
<dbReference type="EMBL" id="AJ235270">
    <property type="protein sequence ID" value="CAA14603.1"/>
    <property type="molecule type" value="Genomic_DNA"/>
</dbReference>
<dbReference type="PIR" id="D71723">
    <property type="entry name" value="D71723"/>
</dbReference>
<dbReference type="RefSeq" id="NP_220526.1">
    <property type="nucleotide sequence ID" value="NC_000963.1"/>
</dbReference>
<dbReference type="RefSeq" id="WP_004597178.1">
    <property type="nucleotide sequence ID" value="NC_000963.1"/>
</dbReference>
<dbReference type="SMR" id="P50056"/>
<dbReference type="STRING" id="272947.gene:17555218"/>
<dbReference type="EnsemblBacteria" id="CAA14603">
    <property type="protein sequence ID" value="CAA14603"/>
    <property type="gene ID" value="CAA14603"/>
</dbReference>
<dbReference type="GeneID" id="57569263"/>
<dbReference type="KEGG" id="rpr:RP135"/>
<dbReference type="PATRIC" id="fig|272947.5.peg.136"/>
<dbReference type="eggNOG" id="COG0250">
    <property type="taxonomic scope" value="Bacteria"/>
</dbReference>
<dbReference type="HOGENOM" id="CLU_067287_1_0_5"/>
<dbReference type="OrthoDB" id="9809075at2"/>
<dbReference type="Proteomes" id="UP000002480">
    <property type="component" value="Chromosome"/>
</dbReference>
<dbReference type="GO" id="GO:0005829">
    <property type="term" value="C:cytosol"/>
    <property type="evidence" value="ECO:0007669"/>
    <property type="project" value="TreeGrafter"/>
</dbReference>
<dbReference type="GO" id="GO:0006353">
    <property type="term" value="P:DNA-templated transcription termination"/>
    <property type="evidence" value="ECO:0007669"/>
    <property type="project" value="UniProtKB-UniRule"/>
</dbReference>
<dbReference type="GO" id="GO:0032784">
    <property type="term" value="P:regulation of DNA-templated transcription elongation"/>
    <property type="evidence" value="ECO:0007669"/>
    <property type="project" value="InterPro"/>
</dbReference>
<dbReference type="GO" id="GO:0031564">
    <property type="term" value="P:transcription antitermination"/>
    <property type="evidence" value="ECO:0007669"/>
    <property type="project" value="UniProtKB-UniRule"/>
</dbReference>
<dbReference type="GO" id="GO:0140673">
    <property type="term" value="P:transcription elongation-coupled chromatin remodeling"/>
    <property type="evidence" value="ECO:0007669"/>
    <property type="project" value="InterPro"/>
</dbReference>
<dbReference type="CDD" id="cd06091">
    <property type="entry name" value="KOW_NusG"/>
    <property type="match status" value="1"/>
</dbReference>
<dbReference type="CDD" id="cd09891">
    <property type="entry name" value="NGN_Bact_1"/>
    <property type="match status" value="1"/>
</dbReference>
<dbReference type="FunFam" id="2.30.30.30:FF:000002">
    <property type="entry name" value="Transcription termination/antitermination factor NusG"/>
    <property type="match status" value="1"/>
</dbReference>
<dbReference type="Gene3D" id="2.30.30.30">
    <property type="match status" value="1"/>
</dbReference>
<dbReference type="Gene3D" id="3.30.70.940">
    <property type="entry name" value="NusG, N-terminal domain"/>
    <property type="match status" value="1"/>
</dbReference>
<dbReference type="HAMAP" id="MF_00948">
    <property type="entry name" value="NusG"/>
    <property type="match status" value="1"/>
</dbReference>
<dbReference type="InterPro" id="IPR005824">
    <property type="entry name" value="KOW"/>
</dbReference>
<dbReference type="InterPro" id="IPR047050">
    <property type="entry name" value="NGN"/>
</dbReference>
<dbReference type="InterPro" id="IPR006645">
    <property type="entry name" value="NGN-like_dom"/>
</dbReference>
<dbReference type="InterPro" id="IPR036735">
    <property type="entry name" value="NGN_dom_sf"/>
</dbReference>
<dbReference type="InterPro" id="IPR043425">
    <property type="entry name" value="NusG-like"/>
</dbReference>
<dbReference type="InterPro" id="IPR014722">
    <property type="entry name" value="Rib_uL2_dom2"/>
</dbReference>
<dbReference type="InterPro" id="IPR001062">
    <property type="entry name" value="Transcrpt_antiterm_NusG"/>
</dbReference>
<dbReference type="InterPro" id="IPR015869">
    <property type="entry name" value="Transcrpt_antiterm_NusG_bac_CS"/>
</dbReference>
<dbReference type="InterPro" id="IPR008991">
    <property type="entry name" value="Translation_prot_SH3-like_sf"/>
</dbReference>
<dbReference type="NCBIfam" id="TIGR00922">
    <property type="entry name" value="nusG"/>
    <property type="match status" value="1"/>
</dbReference>
<dbReference type="PANTHER" id="PTHR30265">
    <property type="entry name" value="RHO-INTERACTING TRANSCRIPTION TERMINATION FACTOR NUSG"/>
    <property type="match status" value="1"/>
</dbReference>
<dbReference type="PANTHER" id="PTHR30265:SF2">
    <property type="entry name" value="TRANSCRIPTION TERMINATION_ANTITERMINATION PROTEIN NUSG"/>
    <property type="match status" value="1"/>
</dbReference>
<dbReference type="Pfam" id="PF00467">
    <property type="entry name" value="KOW"/>
    <property type="match status" value="1"/>
</dbReference>
<dbReference type="Pfam" id="PF02357">
    <property type="entry name" value="NusG"/>
    <property type="match status" value="1"/>
</dbReference>
<dbReference type="PRINTS" id="PR00338">
    <property type="entry name" value="NUSGTNSCPFCT"/>
</dbReference>
<dbReference type="SMART" id="SM00739">
    <property type="entry name" value="KOW"/>
    <property type="match status" value="1"/>
</dbReference>
<dbReference type="SMART" id="SM00738">
    <property type="entry name" value="NGN"/>
    <property type="match status" value="1"/>
</dbReference>
<dbReference type="SUPFAM" id="SSF82679">
    <property type="entry name" value="N-utilization substance G protein NusG, N-terminal domain"/>
    <property type="match status" value="1"/>
</dbReference>
<dbReference type="SUPFAM" id="SSF50104">
    <property type="entry name" value="Translation proteins SH3-like domain"/>
    <property type="match status" value="1"/>
</dbReference>
<dbReference type="PROSITE" id="PS01014">
    <property type="entry name" value="NUSG"/>
    <property type="match status" value="1"/>
</dbReference>
<feature type="chain" id="PRO_0000113942" description="Transcription termination/antitermination protein NusG">
    <location>
        <begin position="1"/>
        <end position="192"/>
    </location>
</feature>
<sequence>MTEQTIDNILPASKNNVKQWYVVHTASGAEKRIKEDILRKIAKQKMTDFFEDILIPVFGVSEVKRGKNVKVEKKLMPSYILIKMNMTDKSWHLVKNIPGVTGFLGSKIVPKALTESEIQNIFNNLEAEAKVAKNSKLYEVGEIVTVTDGPFETFMGTVEAIDKARNRLKVSVSIFGKATPIELNFNQVKKSD</sequence>
<comment type="function">
    <text evidence="1">Participates in transcription elongation, termination and antitermination.</text>
</comment>
<comment type="similarity">
    <text evidence="1">Belongs to the NusG family.</text>
</comment>